<organism>
    <name type="scientific">Rattus norvegicus</name>
    <name type="common">Rat</name>
    <dbReference type="NCBI Taxonomy" id="10116"/>
    <lineage>
        <taxon>Eukaryota</taxon>
        <taxon>Metazoa</taxon>
        <taxon>Chordata</taxon>
        <taxon>Craniata</taxon>
        <taxon>Vertebrata</taxon>
        <taxon>Euteleostomi</taxon>
        <taxon>Mammalia</taxon>
        <taxon>Eutheria</taxon>
        <taxon>Euarchontoglires</taxon>
        <taxon>Glires</taxon>
        <taxon>Rodentia</taxon>
        <taxon>Myomorpha</taxon>
        <taxon>Muroidea</taxon>
        <taxon>Muridae</taxon>
        <taxon>Murinae</taxon>
        <taxon>Rattus</taxon>
    </lineage>
</organism>
<protein>
    <recommendedName>
        <fullName>Estradiol 17-beta-dehydrogenase 2</fullName>
        <ecNumber evidence="5">1.1.1.62</ecNumber>
    </recommendedName>
    <alternativeName>
        <fullName>17-beta-hydroxysteroid dehydrogenase type 2</fullName>
        <shortName>17-beta-HSD 2</shortName>
    </alternativeName>
    <alternativeName>
        <fullName>Testosterone 17-beta-dehydrogenase</fullName>
        <ecNumber evidence="5">1.1.1.239</ecNumber>
    </alternativeName>
</protein>
<accession>Q62730</accession>
<dbReference type="EC" id="1.1.1.62" evidence="5"/>
<dbReference type="EC" id="1.1.1.239" evidence="5"/>
<dbReference type="EMBL" id="X91234">
    <property type="protein sequence ID" value="CAA62617.1"/>
    <property type="molecule type" value="mRNA"/>
</dbReference>
<dbReference type="RefSeq" id="NP_077367.1">
    <property type="nucleotide sequence ID" value="NM_024391.1"/>
</dbReference>
<dbReference type="SMR" id="Q62730"/>
<dbReference type="FunCoup" id="Q62730">
    <property type="interactions" value="67"/>
</dbReference>
<dbReference type="STRING" id="10116.ENSRNOP00000018795"/>
<dbReference type="BindingDB" id="Q62730"/>
<dbReference type="ChEMBL" id="CHEMBL1914268"/>
<dbReference type="PhosphoSitePlus" id="Q62730"/>
<dbReference type="PaxDb" id="10116-ENSRNOP00000018795"/>
<dbReference type="GeneID" id="79243"/>
<dbReference type="KEGG" id="rno:79243"/>
<dbReference type="UCSC" id="RGD:621803">
    <property type="organism name" value="rat"/>
</dbReference>
<dbReference type="AGR" id="RGD:621803"/>
<dbReference type="CTD" id="3294"/>
<dbReference type="RGD" id="621803">
    <property type="gene designation" value="Hsd17b2"/>
</dbReference>
<dbReference type="eggNOG" id="KOG1610">
    <property type="taxonomic scope" value="Eukaryota"/>
</dbReference>
<dbReference type="InParanoid" id="Q62730"/>
<dbReference type="OrthoDB" id="9876299at2759"/>
<dbReference type="PhylomeDB" id="Q62730"/>
<dbReference type="Reactome" id="R-RNO-193144">
    <property type="pathway name" value="Estrogen biosynthesis"/>
</dbReference>
<dbReference type="PRO" id="PR:Q62730"/>
<dbReference type="Proteomes" id="UP000002494">
    <property type="component" value="Unplaced"/>
</dbReference>
<dbReference type="GO" id="GO:0005789">
    <property type="term" value="C:endoplasmic reticulum membrane"/>
    <property type="evidence" value="ECO:0000250"/>
    <property type="project" value="UniProtKB"/>
</dbReference>
<dbReference type="GO" id="GO:0043231">
    <property type="term" value="C:intracellular membrane-bounded organelle"/>
    <property type="evidence" value="ECO:0000318"/>
    <property type="project" value="GO_Central"/>
</dbReference>
<dbReference type="GO" id="GO:0004303">
    <property type="term" value="F:estradiol 17-beta-dehydrogenase [NAD(P)+] activity"/>
    <property type="evidence" value="ECO:0000314"/>
    <property type="project" value="RGD"/>
</dbReference>
<dbReference type="GO" id="GO:0047035">
    <property type="term" value="F:testosterone dehydrogenase (NAD+) activity"/>
    <property type="evidence" value="ECO:0000314"/>
    <property type="project" value="RGD"/>
</dbReference>
<dbReference type="GO" id="GO:0006702">
    <property type="term" value="P:androgen biosynthetic process"/>
    <property type="evidence" value="ECO:0000314"/>
    <property type="project" value="RGD"/>
</dbReference>
<dbReference type="GO" id="GO:0008209">
    <property type="term" value="P:androgen metabolic process"/>
    <property type="evidence" value="ECO:0000266"/>
    <property type="project" value="RGD"/>
</dbReference>
<dbReference type="GO" id="GO:0060348">
    <property type="term" value="P:bone development"/>
    <property type="evidence" value="ECO:0000270"/>
    <property type="project" value="RGD"/>
</dbReference>
<dbReference type="GO" id="GO:0071248">
    <property type="term" value="P:cellular response to metal ion"/>
    <property type="evidence" value="ECO:0000270"/>
    <property type="project" value="RGD"/>
</dbReference>
<dbReference type="GO" id="GO:0006703">
    <property type="term" value="P:estrogen biosynthetic process"/>
    <property type="evidence" value="ECO:0000314"/>
    <property type="project" value="RGD"/>
</dbReference>
<dbReference type="GO" id="GO:0001701">
    <property type="term" value="P:in utero embryonic development"/>
    <property type="evidence" value="ECO:0000266"/>
    <property type="project" value="RGD"/>
</dbReference>
<dbReference type="GO" id="GO:0001890">
    <property type="term" value="P:placenta development"/>
    <property type="evidence" value="ECO:0000266"/>
    <property type="project" value="RGD"/>
</dbReference>
<dbReference type="GO" id="GO:0032526">
    <property type="term" value="P:response to retinoic acid"/>
    <property type="evidence" value="ECO:0000266"/>
    <property type="project" value="RGD"/>
</dbReference>
<dbReference type="GO" id="GO:0008202">
    <property type="term" value="P:steroid metabolic process"/>
    <property type="evidence" value="ECO:0000318"/>
    <property type="project" value="GO_Central"/>
</dbReference>
<dbReference type="CDD" id="cd09805">
    <property type="entry name" value="type2_17beta_HSD-like_SDR_c"/>
    <property type="match status" value="1"/>
</dbReference>
<dbReference type="FunFam" id="3.40.50.720:FF:000074">
    <property type="entry name" value="Retinol dehydrogenase type 1"/>
    <property type="match status" value="1"/>
</dbReference>
<dbReference type="Gene3D" id="3.40.50.720">
    <property type="entry name" value="NAD(P)-binding Rossmann-like Domain"/>
    <property type="match status" value="1"/>
</dbReference>
<dbReference type="InterPro" id="IPR036291">
    <property type="entry name" value="NAD(P)-bd_dom_sf"/>
</dbReference>
<dbReference type="InterPro" id="IPR020904">
    <property type="entry name" value="Sc_DH/Rdtase_CS"/>
</dbReference>
<dbReference type="InterPro" id="IPR002347">
    <property type="entry name" value="SDR_fam"/>
</dbReference>
<dbReference type="PANTHER" id="PTHR43313:SF3">
    <property type="entry name" value="17-BETA-HYDROXYSTEROID DEHYDROGENASE TYPE 2"/>
    <property type="match status" value="1"/>
</dbReference>
<dbReference type="PANTHER" id="PTHR43313">
    <property type="entry name" value="SHORT-CHAIN DEHYDROGENASE/REDUCTASE FAMILY 9C"/>
    <property type="match status" value="1"/>
</dbReference>
<dbReference type="Pfam" id="PF00106">
    <property type="entry name" value="adh_short"/>
    <property type="match status" value="1"/>
</dbReference>
<dbReference type="PRINTS" id="PR00081">
    <property type="entry name" value="GDHRDH"/>
</dbReference>
<dbReference type="PRINTS" id="PR00080">
    <property type="entry name" value="SDRFAMILY"/>
</dbReference>
<dbReference type="SUPFAM" id="SSF51735">
    <property type="entry name" value="NAD(P)-binding Rossmann-fold domains"/>
    <property type="match status" value="1"/>
</dbReference>
<dbReference type="PROSITE" id="PS00061">
    <property type="entry name" value="ADH_SHORT"/>
    <property type="match status" value="1"/>
</dbReference>
<keyword id="KW-0256">Endoplasmic reticulum</keyword>
<keyword id="KW-0444">Lipid biosynthesis</keyword>
<keyword id="KW-0443">Lipid metabolism</keyword>
<keyword id="KW-0472">Membrane</keyword>
<keyword id="KW-0520">NAD</keyword>
<keyword id="KW-0560">Oxidoreductase</keyword>
<keyword id="KW-1185">Reference proteome</keyword>
<keyword id="KW-0735">Signal-anchor</keyword>
<keyword id="KW-0752">Steroid biosynthesis</keyword>
<keyword id="KW-0812">Transmembrane</keyword>
<keyword id="KW-1133">Transmembrane helix</keyword>
<reference key="1">
    <citation type="journal article" date="1996" name="Endocrinology">
        <title>Cloning of rat 17 beta-hydroxysteroid dehydrogenase type 2 and characterization of tissue distribution and catalytic activity of rat type 1 and type 2 enzymes.</title>
        <authorList>
            <person name="Akinola L.A."/>
            <person name="Poutanen M."/>
            <person name="Vihko R."/>
        </authorList>
    </citation>
    <scope>NUCLEOTIDE SEQUENCE [MRNA]</scope>
    <scope>TISSUE SPECIFICITY</scope>
    <scope>CATALYTIC ACTIVITY</scope>
    <scope>FUNCTION</scope>
    <source>
        <strain>Sprague-Dawley</strain>
        <tissue>Placenta</tissue>
    </source>
</reference>
<comment type="function">
    <text evidence="2 5">Catalyzes the NAD-dependent oxidation of highly active 17beta-hydroxysteroids, such as estradiol (E2), testosterone (T), and dihydrotestosterone (DHT), to their less active forms and thus regulates the biological potency of these steroids. Oxidizes estradiol to estrone, testosterone to androstenedione, and dihydrotestosterone to 5alpha-androstan-3,17-dione (PubMed:8612487). Also has 20-alpha-HSD activity (By similarity).</text>
</comment>
<comment type="catalytic activity">
    <reaction evidence="5">
        <text>17beta-estradiol + NAD(+) = estrone + NADH + H(+)</text>
        <dbReference type="Rhea" id="RHEA:24612"/>
        <dbReference type="ChEBI" id="CHEBI:15378"/>
        <dbReference type="ChEBI" id="CHEBI:16469"/>
        <dbReference type="ChEBI" id="CHEBI:17263"/>
        <dbReference type="ChEBI" id="CHEBI:57540"/>
        <dbReference type="ChEBI" id="CHEBI:57945"/>
        <dbReference type="EC" id="1.1.1.62"/>
    </reaction>
    <physiologicalReaction direction="left-to-right" evidence="7">
        <dbReference type="Rhea" id="RHEA:24613"/>
    </physiologicalReaction>
</comment>
<comment type="catalytic activity">
    <reaction evidence="5">
        <text>testosterone + NAD(+) = androst-4-ene-3,17-dione + NADH + H(+)</text>
        <dbReference type="Rhea" id="RHEA:14929"/>
        <dbReference type="ChEBI" id="CHEBI:15378"/>
        <dbReference type="ChEBI" id="CHEBI:16422"/>
        <dbReference type="ChEBI" id="CHEBI:17347"/>
        <dbReference type="ChEBI" id="CHEBI:57540"/>
        <dbReference type="ChEBI" id="CHEBI:57945"/>
        <dbReference type="EC" id="1.1.1.239"/>
    </reaction>
    <physiologicalReaction direction="left-to-right" evidence="7">
        <dbReference type="Rhea" id="RHEA:14930"/>
    </physiologicalReaction>
</comment>
<comment type="catalytic activity">
    <reaction evidence="2">
        <text>17beta-hydroxy-5alpha-androstan-3-one + NAD(+) = 5alpha-androstan-3,17-dione + NADH + H(+)</text>
        <dbReference type="Rhea" id="RHEA:41992"/>
        <dbReference type="ChEBI" id="CHEBI:15378"/>
        <dbReference type="ChEBI" id="CHEBI:15994"/>
        <dbReference type="ChEBI" id="CHEBI:16330"/>
        <dbReference type="ChEBI" id="CHEBI:57540"/>
        <dbReference type="ChEBI" id="CHEBI:57945"/>
    </reaction>
</comment>
<comment type="catalytic activity">
    <reaction evidence="2">
        <text>(20S)-hydroxypregn-4-en-3-one + NAD(+) = progesterone + NADH + H(+)</text>
        <dbReference type="Rhea" id="RHEA:42108"/>
        <dbReference type="ChEBI" id="CHEBI:15378"/>
        <dbReference type="ChEBI" id="CHEBI:17026"/>
        <dbReference type="ChEBI" id="CHEBI:28453"/>
        <dbReference type="ChEBI" id="CHEBI:57540"/>
        <dbReference type="ChEBI" id="CHEBI:57945"/>
    </reaction>
</comment>
<comment type="subunit">
    <text evidence="2">Homodimer.</text>
</comment>
<comment type="subcellular location">
    <subcellularLocation>
        <location evidence="2">Endoplasmic reticulum membrane</location>
        <topology evidence="2">Single-pass type II membrane protein</topology>
    </subcellularLocation>
</comment>
<comment type="tissue specificity">
    <text evidence="5">Highly expressed in the placenta, and in the small intestine, and liver.</text>
</comment>
<comment type="similarity">
    <text evidence="6">Belongs to the short-chain dehydrogenases/reductases (SDR) family.</text>
</comment>
<gene>
    <name type="primary">Hsd17b2</name>
    <name type="synonym">Edh17b2</name>
</gene>
<proteinExistence type="evidence at protein level"/>
<sequence length="381" mass="41967">MNPFSSESAWLCLTATAVLGGMLLCKAWSSGQLRSQVVCLAGLWGGACLLSLSLLCSLFLLSVSCFFLLYVSSSDQDLLPVDQKAVLVTGADSGFGHALAKHLDKLGFTVFAGVLDKEGPGAEELRKNCSERLSVLQMDVTKPEQIKDVHSEVAEKIQDKGLWAVVNNAGVLHFPIDGELIPMTVYRKCMAVNFFGAVEVTKVFLPLLRKSKGRLVNVSSMGAMIPFQMVAAYASTKAAISMFSAVIRQELAKWGVKVVTIHPGGFQTNIVGSQDSWDKMEKEILDHFSKEIQENYGQEYVHTQKLALPVMREMSNPDITPVLRDIQHAICAKNPSSFYCSGRMTYLWICFAAYSPISLLDYILKNYFTPKLMPRALRTAS</sequence>
<feature type="chain" id="PRO_0000054572" description="Estradiol 17-beta-dehydrogenase 2">
    <location>
        <begin position="1"/>
        <end position="381"/>
    </location>
</feature>
<feature type="transmembrane region" description="Helical; Signal-anchor for type II membrane protein" evidence="3">
    <location>
        <begin position="4"/>
        <end position="24"/>
    </location>
</feature>
<feature type="active site" description="Proton acceptor" evidence="4">
    <location>
        <position position="233"/>
    </location>
</feature>
<feature type="binding site" evidence="1">
    <location>
        <begin position="83"/>
        <end position="112"/>
    </location>
    <ligand>
        <name>NAD(+)</name>
        <dbReference type="ChEBI" id="CHEBI:57540"/>
    </ligand>
</feature>
<feature type="binding site" evidence="1">
    <location>
        <position position="220"/>
    </location>
    <ligand>
        <name>substrate</name>
    </ligand>
</feature>
<evidence type="ECO:0000250" key="1"/>
<evidence type="ECO:0000250" key="2">
    <source>
        <dbReference type="UniProtKB" id="P37059"/>
    </source>
</evidence>
<evidence type="ECO:0000255" key="3"/>
<evidence type="ECO:0000255" key="4">
    <source>
        <dbReference type="PROSITE-ProRule" id="PRU10001"/>
    </source>
</evidence>
<evidence type="ECO:0000269" key="5">
    <source>
    </source>
</evidence>
<evidence type="ECO:0000305" key="6"/>
<evidence type="ECO:0000305" key="7">
    <source>
    </source>
</evidence>
<name>DHB2_RAT</name>